<accession>P94433</accession>
<accession>Q797N2</accession>
<name>CUTR_BACSU</name>
<dbReference type="EMBL" id="D50453">
    <property type="protein sequence ID" value="BAA09027.1"/>
    <property type="molecule type" value="Genomic_DNA"/>
</dbReference>
<dbReference type="EMBL" id="AL009126">
    <property type="protein sequence ID" value="CAB12204.1"/>
    <property type="molecule type" value="Genomic_DNA"/>
</dbReference>
<dbReference type="PIR" id="G69764">
    <property type="entry name" value="G69764"/>
</dbReference>
<dbReference type="RefSeq" id="NP_388278.1">
    <property type="nucleotide sequence ID" value="NC_000964.3"/>
</dbReference>
<dbReference type="RefSeq" id="WP_003246724.1">
    <property type="nucleotide sequence ID" value="NZ_OZ025638.1"/>
</dbReference>
<dbReference type="FunCoup" id="P94433">
    <property type="interactions" value="9"/>
</dbReference>
<dbReference type="STRING" id="224308.BSU03960"/>
<dbReference type="PaxDb" id="224308-BSU03960"/>
<dbReference type="EnsemblBacteria" id="CAB12204">
    <property type="protein sequence ID" value="CAB12204"/>
    <property type="gene ID" value="BSU_03960"/>
</dbReference>
<dbReference type="GeneID" id="938265"/>
<dbReference type="KEGG" id="bsu:BSU03960"/>
<dbReference type="PATRIC" id="fig|224308.179.peg.419"/>
<dbReference type="eggNOG" id="COG1349">
    <property type="taxonomic scope" value="Bacteria"/>
</dbReference>
<dbReference type="InParanoid" id="P94433"/>
<dbReference type="OrthoDB" id="9797223at2"/>
<dbReference type="PhylomeDB" id="P94433"/>
<dbReference type="BioCyc" id="BSUB:BSU03960-MONOMER"/>
<dbReference type="Proteomes" id="UP000001570">
    <property type="component" value="Chromosome"/>
</dbReference>
<dbReference type="GO" id="GO:0005737">
    <property type="term" value="C:cytoplasm"/>
    <property type="evidence" value="ECO:0007669"/>
    <property type="project" value="UniProtKB-SubCell"/>
</dbReference>
<dbReference type="GO" id="GO:0003677">
    <property type="term" value="F:DNA binding"/>
    <property type="evidence" value="ECO:0007669"/>
    <property type="project" value="UniProtKB-KW"/>
</dbReference>
<dbReference type="GO" id="GO:0003700">
    <property type="term" value="F:DNA-binding transcription factor activity"/>
    <property type="evidence" value="ECO:0007669"/>
    <property type="project" value="InterPro"/>
</dbReference>
<dbReference type="GO" id="GO:0046872">
    <property type="term" value="F:metal ion binding"/>
    <property type="evidence" value="ECO:0007669"/>
    <property type="project" value="UniProtKB-KW"/>
</dbReference>
<dbReference type="Gene3D" id="3.30.70.2050">
    <property type="match status" value="1"/>
</dbReference>
<dbReference type="Gene3D" id="1.10.10.10">
    <property type="entry name" value="Winged helix-like DNA-binding domain superfamily/Winged helix DNA-binding domain"/>
    <property type="match status" value="1"/>
</dbReference>
<dbReference type="InterPro" id="IPR001034">
    <property type="entry name" value="DeoR_HTH"/>
</dbReference>
<dbReference type="InterPro" id="IPR008719">
    <property type="entry name" value="N2O_reductase_NosL"/>
</dbReference>
<dbReference type="InterPro" id="IPR036388">
    <property type="entry name" value="WH-like_DNA-bd_sf"/>
</dbReference>
<dbReference type="InterPro" id="IPR036390">
    <property type="entry name" value="WH_DNA-bd_sf"/>
</dbReference>
<dbReference type="PANTHER" id="PTHR41247">
    <property type="entry name" value="HTH-TYPE TRANSCRIPTIONAL REPRESSOR YCNK"/>
    <property type="match status" value="1"/>
</dbReference>
<dbReference type="PANTHER" id="PTHR41247:SF1">
    <property type="entry name" value="HTH-TYPE TRANSCRIPTIONAL REPRESSOR YCNK"/>
    <property type="match status" value="1"/>
</dbReference>
<dbReference type="Pfam" id="PF08220">
    <property type="entry name" value="HTH_DeoR"/>
    <property type="match status" value="1"/>
</dbReference>
<dbReference type="Pfam" id="PF05573">
    <property type="entry name" value="NosL"/>
    <property type="match status" value="1"/>
</dbReference>
<dbReference type="SMART" id="SM00420">
    <property type="entry name" value="HTH_DEOR"/>
    <property type="match status" value="1"/>
</dbReference>
<dbReference type="SUPFAM" id="SSF160387">
    <property type="entry name" value="NosL/MerB-like"/>
    <property type="match status" value="1"/>
</dbReference>
<dbReference type="SUPFAM" id="SSF46785">
    <property type="entry name" value="Winged helix' DNA-binding domain"/>
    <property type="match status" value="1"/>
</dbReference>
<dbReference type="PROSITE" id="PS51000">
    <property type="entry name" value="HTH_DEOR_2"/>
    <property type="match status" value="1"/>
</dbReference>
<keyword id="KW-0186">Copper</keyword>
<keyword id="KW-0963">Cytoplasm</keyword>
<keyword id="KW-0238">DNA-binding</keyword>
<keyword id="KW-0479">Metal-binding</keyword>
<keyword id="KW-1185">Reference proteome</keyword>
<keyword id="KW-0678">Repressor</keyword>
<keyword id="KW-0804">Transcription</keyword>
<keyword id="KW-0805">Transcription regulation</keyword>
<evidence type="ECO:0000255" key="1">
    <source>
        <dbReference type="PROSITE-ProRule" id="PRU00349"/>
    </source>
</evidence>
<evidence type="ECO:0000269" key="2">
    <source>
    </source>
</evidence>
<evidence type="ECO:0000305" key="3"/>
<evidence type="ECO:0000312" key="4">
    <source>
        <dbReference type="EMBL" id="CAB12204.1"/>
    </source>
</evidence>
<organism>
    <name type="scientific">Bacillus subtilis (strain 168)</name>
    <dbReference type="NCBI Taxonomy" id="224308"/>
    <lineage>
        <taxon>Bacteria</taxon>
        <taxon>Bacillati</taxon>
        <taxon>Bacillota</taxon>
        <taxon>Bacilli</taxon>
        <taxon>Bacillales</taxon>
        <taxon>Bacillaceae</taxon>
        <taxon>Bacillus</taxon>
    </lineage>
</organism>
<protein>
    <recommendedName>
        <fullName evidence="3">HTH-type transcriptional repressor CutR</fullName>
    </recommendedName>
</protein>
<reference key="1">
    <citation type="journal article" date="1996" name="Microbiology">
        <title>The 25 degrees-36 degrees region of the Bacillus subtilis chromosome: determination of the sequence of a 146 kb segment and identification of 113 genes.</title>
        <authorList>
            <person name="Yamane K."/>
            <person name="Kumano M."/>
            <person name="Kurita K."/>
        </authorList>
    </citation>
    <scope>NUCLEOTIDE SEQUENCE [GENOMIC DNA]</scope>
    <source>
        <strain>168</strain>
    </source>
</reference>
<reference key="2">
    <citation type="journal article" date="1997" name="Nature">
        <title>The complete genome sequence of the Gram-positive bacterium Bacillus subtilis.</title>
        <authorList>
            <person name="Kunst F."/>
            <person name="Ogasawara N."/>
            <person name="Moszer I."/>
            <person name="Albertini A.M."/>
            <person name="Alloni G."/>
            <person name="Azevedo V."/>
            <person name="Bertero M.G."/>
            <person name="Bessieres P."/>
            <person name="Bolotin A."/>
            <person name="Borchert S."/>
            <person name="Borriss R."/>
            <person name="Boursier L."/>
            <person name="Brans A."/>
            <person name="Braun M."/>
            <person name="Brignell S.C."/>
            <person name="Bron S."/>
            <person name="Brouillet S."/>
            <person name="Bruschi C.V."/>
            <person name="Caldwell B."/>
            <person name="Capuano V."/>
            <person name="Carter N.M."/>
            <person name="Choi S.-K."/>
            <person name="Codani J.-J."/>
            <person name="Connerton I.F."/>
            <person name="Cummings N.J."/>
            <person name="Daniel R.A."/>
            <person name="Denizot F."/>
            <person name="Devine K.M."/>
            <person name="Duesterhoeft A."/>
            <person name="Ehrlich S.D."/>
            <person name="Emmerson P.T."/>
            <person name="Entian K.-D."/>
            <person name="Errington J."/>
            <person name="Fabret C."/>
            <person name="Ferrari E."/>
            <person name="Foulger D."/>
            <person name="Fritz C."/>
            <person name="Fujita M."/>
            <person name="Fujita Y."/>
            <person name="Fuma S."/>
            <person name="Galizzi A."/>
            <person name="Galleron N."/>
            <person name="Ghim S.-Y."/>
            <person name="Glaser P."/>
            <person name="Goffeau A."/>
            <person name="Golightly E.J."/>
            <person name="Grandi G."/>
            <person name="Guiseppi G."/>
            <person name="Guy B.J."/>
            <person name="Haga K."/>
            <person name="Haiech J."/>
            <person name="Harwood C.R."/>
            <person name="Henaut A."/>
            <person name="Hilbert H."/>
            <person name="Holsappel S."/>
            <person name="Hosono S."/>
            <person name="Hullo M.-F."/>
            <person name="Itaya M."/>
            <person name="Jones L.-M."/>
            <person name="Joris B."/>
            <person name="Karamata D."/>
            <person name="Kasahara Y."/>
            <person name="Klaerr-Blanchard M."/>
            <person name="Klein C."/>
            <person name="Kobayashi Y."/>
            <person name="Koetter P."/>
            <person name="Koningstein G."/>
            <person name="Krogh S."/>
            <person name="Kumano M."/>
            <person name="Kurita K."/>
            <person name="Lapidus A."/>
            <person name="Lardinois S."/>
            <person name="Lauber J."/>
            <person name="Lazarevic V."/>
            <person name="Lee S.-M."/>
            <person name="Levine A."/>
            <person name="Liu H."/>
            <person name="Masuda S."/>
            <person name="Mauel C."/>
            <person name="Medigue C."/>
            <person name="Medina N."/>
            <person name="Mellado R.P."/>
            <person name="Mizuno M."/>
            <person name="Moestl D."/>
            <person name="Nakai S."/>
            <person name="Noback M."/>
            <person name="Noone D."/>
            <person name="O'Reilly M."/>
            <person name="Ogawa K."/>
            <person name="Ogiwara A."/>
            <person name="Oudega B."/>
            <person name="Park S.-H."/>
            <person name="Parro V."/>
            <person name="Pohl T.M."/>
            <person name="Portetelle D."/>
            <person name="Porwollik S."/>
            <person name="Prescott A.M."/>
            <person name="Presecan E."/>
            <person name="Pujic P."/>
            <person name="Purnelle B."/>
            <person name="Rapoport G."/>
            <person name="Rey M."/>
            <person name="Reynolds S."/>
            <person name="Rieger M."/>
            <person name="Rivolta C."/>
            <person name="Rocha E."/>
            <person name="Roche B."/>
            <person name="Rose M."/>
            <person name="Sadaie Y."/>
            <person name="Sato T."/>
            <person name="Scanlan E."/>
            <person name="Schleich S."/>
            <person name="Schroeter R."/>
            <person name="Scoffone F."/>
            <person name="Sekiguchi J."/>
            <person name="Sekowska A."/>
            <person name="Seror S.J."/>
            <person name="Serror P."/>
            <person name="Shin B.-S."/>
            <person name="Soldo B."/>
            <person name="Sorokin A."/>
            <person name="Tacconi E."/>
            <person name="Takagi T."/>
            <person name="Takahashi H."/>
            <person name="Takemaru K."/>
            <person name="Takeuchi M."/>
            <person name="Tamakoshi A."/>
            <person name="Tanaka T."/>
            <person name="Terpstra P."/>
            <person name="Tognoni A."/>
            <person name="Tosato V."/>
            <person name="Uchiyama S."/>
            <person name="Vandenbol M."/>
            <person name="Vannier F."/>
            <person name="Vassarotti A."/>
            <person name="Viari A."/>
            <person name="Wambutt R."/>
            <person name="Wedler E."/>
            <person name="Wedler H."/>
            <person name="Weitzenegger T."/>
            <person name="Winters P."/>
            <person name="Wipat A."/>
            <person name="Yamamoto H."/>
            <person name="Yamane K."/>
            <person name="Yasumoto K."/>
            <person name="Yata K."/>
            <person name="Yoshida K."/>
            <person name="Yoshikawa H.-F."/>
            <person name="Zumstein E."/>
            <person name="Yoshikawa H."/>
            <person name="Danchin A."/>
        </authorList>
    </citation>
    <scope>NUCLEOTIDE SEQUENCE [LARGE SCALE GENOMIC DNA]</scope>
    <source>
        <strain>168</strain>
    </source>
</reference>
<reference key="3">
    <citation type="journal article" date="2009" name="J. Bacteriol.">
        <title>Copper acquisition is mediated by ycnJ and regulated by ycnK and csoR in Bacillus subtilis.</title>
        <authorList>
            <person name="Chillappagari S."/>
            <person name="Miethke M."/>
            <person name="Trip H."/>
            <person name="Kuipers O.P."/>
            <person name="Marahiel M.A."/>
        </authorList>
    </citation>
    <scope>FUNCTION AS CUTJ/YCNJ REGULATOR</scope>
    <scope>INDUCTION</scope>
    <scope>DISRUPTION PHENOTYPE</scope>
    <source>
        <strain>ATCC 21332 / IAM 1213</strain>
    </source>
</reference>
<sequence>MLPINRQQHILKWLKEEGSLRISDISARFGVSEMTVYRDVNQLVQSNQVIKTAGGITLPVRTPQTDHMCSYCLKPVNQAHSVQLITVNQDIEQLCCAHCAFLRYADKTEEVSHLICRDFLLQTTVSAGSAYFVVNAELNLHCCQPQAIPFATLDHAERFQKGFGGAVCTFDQALEDMLQDRKKRCTCTKK</sequence>
<gene>
    <name evidence="4" type="primary">cutR</name>
    <name type="synonym">ycnK</name>
    <name evidence="4" type="ordered locus">BSU03960</name>
</gene>
<proteinExistence type="evidence at protein level"/>
<feature type="chain" id="PRO_0000360705" description="HTH-type transcriptional repressor CutR">
    <location>
        <begin position="1"/>
        <end position="190"/>
    </location>
</feature>
<feature type="domain" description="HTH deoR-type" evidence="1">
    <location>
        <begin position="3"/>
        <end position="58"/>
    </location>
</feature>
<feature type="DNA-binding region" description="H-T-H motif" evidence="1">
    <location>
        <begin position="20"/>
        <end position="39"/>
    </location>
</feature>
<comment type="function">
    <text evidence="2">May act as a negative transcriptional regulator of cutJ/ycnJ in the presence of copper. May use copper as a corepressor.</text>
</comment>
<comment type="subcellular location">
    <subcellularLocation>
        <location evidence="3">Cytoplasm</location>
    </subcellularLocation>
</comment>
<comment type="induction">
    <text evidence="2">Significantly induced under copper-limiting conditions.</text>
</comment>
<comment type="disruption phenotype">
    <text evidence="2">Cells lacking this gene show little or no difference in growth under copper deprivation, whereas possessing enhanced growth under copper excess conditions. Possesses a high intracellular content of copper.</text>
</comment>